<comment type="function">
    <text evidence="4 5">Specifically, dose-dependently and potently blocks the voltage-gated potassium channel Kv1.1/KCNA1 (Ki=1.6 pM) (PubMed:16905168, PubMed:38102952). Moderately blocks potassium channel heterotetramers formed by 3 subunits of Kv1.1/KCNA1 and 1 subunit of Kv1.2/KCNA2 (Ki=56 nM) and weakly blocks those formed by 2 subunits of Kv1.1/KCNA1 and 2 subunits of Kv1.2/KCNA2 (Ki=14 nM).</text>
</comment>
<comment type="subcellular location">
    <subcellularLocation>
        <location evidence="9">Secreted</location>
    </subcellularLocation>
    <subcellularLocation>
        <location evidence="8">Nematocyst</location>
    </subcellularLocation>
</comment>
<comment type="mass spectrometry"/>
<comment type="biotechnology">
    <text evidence="10">As a specific Kv1.1/KCNA1 blocker, may be beneficial for treating Kv1.1/KCNA1 gain-of-function-related neurological disorders, specifically pharmaco-resistant multifocal epilepsy occurring in infants.</text>
</comment>
<comment type="miscellaneous">
    <text evidence="5">Very weakly blocks potassium channels Kv1.2/KCNA1 (Ki=2.24 uM) and Kv1.3/KCNA3 (Ki=1.23 uM). Very weakly blocks potassium channel heterotetramers formed by 1 Kv1.1/KCNA1 and 3 Kv1.2/KCNA2. Does not block Kv1.5/KCNA5, Kv7.2/KCNQ2 and the heterotetramer formed by Kv7.2 and Kv7.3 (KCNQ2/KCNQ3).</text>
</comment>
<comment type="similarity">
    <text evidence="8">Belongs to the sea anemone type 1 potassium channel toxin family. Type 1a subfamily.</text>
</comment>
<feature type="signal peptide" evidence="2">
    <location>
        <begin position="1"/>
        <end position="22"/>
    </location>
</feature>
<feature type="propeptide" id="PRO_0000272029" evidence="4">
    <location>
        <begin position="23"/>
        <end position="49"/>
    </location>
</feature>
<feature type="peptide" id="PRO_0000272030" description="Kappa-actitoxin-Aer3a" evidence="1">
    <location>
        <begin position="50"/>
        <end position="83"/>
    </location>
</feature>
<feature type="domain" description="ShKT" evidence="3">
    <location>
        <begin position="51"/>
        <end position="83"/>
    </location>
</feature>
<feature type="site" description="Key residue for binding Kv1.1/KCNA1 (occludes the channel pore like a cork in a bottle), and important for the voltage-dependence of peptide dissociation" evidence="5">
    <location>
        <position position="72"/>
    </location>
</feature>
<feature type="disulfide bond" evidence="5 11">
    <location>
        <begin position="51"/>
        <end position="83"/>
    </location>
</feature>
<feature type="disulfide bond" evidence="5 11">
    <location>
        <begin position="60"/>
        <end position="76"/>
    </location>
</feature>
<feature type="disulfide bond" evidence="5 11">
    <location>
        <begin position="65"/>
        <end position="80"/>
    </location>
</feature>
<feature type="mutagenesis site" description="Dramatic decrease in potassium channel Kv1.1/KCNA1 blocking activity, but no change in voltage-dependence of toxin dissociation." evidence="5">
    <original>K</original>
    <variation>N</variation>
    <location>
        <position position="70"/>
    </location>
</feature>
<feature type="mutagenesis site" description="Important decrease in potassium channel Kv1.1/KCNA1 blocking activity, and loss of voltage-dependence of toxin dissociation." evidence="5">
    <original>K</original>
    <variation>N</variation>
    <location>
        <position position="72"/>
    </location>
</feature>
<feature type="turn" evidence="12">
    <location>
        <begin position="57"/>
        <end position="59"/>
    </location>
</feature>
<feature type="helix" evidence="12">
    <location>
        <begin position="62"/>
        <end position="67"/>
    </location>
</feature>
<feature type="helix" evidence="12">
    <location>
        <begin position="69"/>
        <end position="73"/>
    </location>
</feature>
<sequence>MKGQMIICLVLIALCMSVVVMAQNLRAEELEKANPKDERVRSFERNQKRACKDYLPKSECTQFRCRTSMKYKYTNCKKTCGTC</sequence>
<evidence type="ECO:0000250" key="1">
    <source>
        <dbReference type="UniProtKB" id="P29187"/>
    </source>
</evidence>
<evidence type="ECO:0000255" key="2"/>
<evidence type="ECO:0000255" key="3">
    <source>
        <dbReference type="PROSITE-ProRule" id="PRU01005"/>
    </source>
</evidence>
<evidence type="ECO:0000269" key="4">
    <source>
    </source>
</evidence>
<evidence type="ECO:0000269" key="5">
    <source>
    </source>
</evidence>
<evidence type="ECO:0000303" key="6">
    <source>
    </source>
</evidence>
<evidence type="ECO:0000303" key="7">
    <source>
    </source>
</evidence>
<evidence type="ECO:0000305" key="8"/>
<evidence type="ECO:0000305" key="9">
    <source>
    </source>
</evidence>
<evidence type="ECO:0000305" key="10">
    <source>
    </source>
</evidence>
<evidence type="ECO:0007744" key="11">
    <source>
        <dbReference type="PDB" id="7OD2"/>
    </source>
</evidence>
<evidence type="ECO:0007829" key="12">
    <source>
        <dbReference type="PDB" id="7OD2"/>
    </source>
</evidence>
<proteinExistence type="evidence at protein level"/>
<protein>
    <recommendedName>
        <fullName evidence="7">Kappa-actitoxin-Aer3a</fullName>
        <shortName evidence="7">Kappa-AITX-Aer3a</shortName>
    </recommendedName>
    <alternativeName>
        <fullName evidence="8">AnerK</fullName>
    </alternativeName>
    <alternativeName>
        <fullName evidence="6">Potassium channel toxin AETX K</fullName>
    </alternativeName>
</protein>
<reference key="1">
    <citation type="journal article" date="2006" name="Toxicon">
        <title>Isolation and cDNA cloning of a potassium channel peptide toxin from the sea anemone Anemonia erythraea.</title>
        <authorList>
            <person name="Hasegawa Y."/>
            <person name="Honma T."/>
            <person name="Nagai H."/>
            <person name="Ishida M."/>
            <person name="Nagashima Y."/>
            <person name="Shiomi K."/>
        </authorList>
    </citation>
    <scope>NUCLEOTIDE SEQUENCE [MRNA]</scope>
    <scope>PARTIAL PROTEIN SEQUENCE</scope>
    <scope>FUNCTION</scope>
    <scope>MASS SPECTROMETRY</scope>
</reference>
<reference key="2">
    <citation type="journal article" date="2012" name="Toxicon">
        <title>Development of a rational nomenclature for naming peptide and protein toxins from sea anemones.</title>
        <authorList>
            <person name="Oliveira J.S."/>
            <person name="Fuentes-Silva D."/>
            <person name="King G.F."/>
        </authorList>
    </citation>
    <scope>NOMENCLATURE</scope>
</reference>
<reference key="3">
    <citation type="journal article" date="2024" name="FASEB J.">
        <title>Selective block of human Kv1.1 channels and an epilepsy-associated gain-of-function mutation by AETX-K peptide.</title>
        <authorList>
            <person name="Zhao R."/>
            <person name="Qasim A."/>
            <person name="Sophanpanichkul P."/>
            <person name="Dai H."/>
            <person name="Nayak M."/>
            <person name="Sher I."/>
            <person name="Chill J."/>
            <person name="Goldstein S.A.N."/>
        </authorList>
    </citation>
    <scope>STRUCTURE BY NMR OF 50-83</scope>
    <scope>FUNCTION</scope>
    <scope>SYNTHESIS OF 50-83</scope>
    <scope>MUTAGENESIS OF LYS-70 AND LYS-72</scope>
</reference>
<accession>Q0EAE5</accession>
<dbReference type="EMBL" id="AB259113">
    <property type="protein sequence ID" value="BAF31325.1"/>
    <property type="molecule type" value="mRNA"/>
</dbReference>
<dbReference type="PDB" id="7OD2">
    <property type="method" value="NMR"/>
    <property type="chains" value="A=50-83"/>
</dbReference>
<dbReference type="PDBsum" id="7OD2"/>
<dbReference type="SMR" id="Q0EAE5"/>
<dbReference type="GO" id="GO:0005576">
    <property type="term" value="C:extracellular region"/>
    <property type="evidence" value="ECO:0007669"/>
    <property type="project" value="UniProtKB-SubCell"/>
</dbReference>
<dbReference type="GO" id="GO:0042151">
    <property type="term" value="C:nematocyst"/>
    <property type="evidence" value="ECO:0007669"/>
    <property type="project" value="UniProtKB-SubCell"/>
</dbReference>
<dbReference type="GO" id="GO:0015459">
    <property type="term" value="F:potassium channel regulator activity"/>
    <property type="evidence" value="ECO:0007669"/>
    <property type="project" value="UniProtKB-KW"/>
</dbReference>
<dbReference type="GO" id="GO:0090729">
    <property type="term" value="F:toxin activity"/>
    <property type="evidence" value="ECO:0007669"/>
    <property type="project" value="UniProtKB-KW"/>
</dbReference>
<dbReference type="InterPro" id="IPR003582">
    <property type="entry name" value="ShKT_dom"/>
</dbReference>
<dbReference type="SUPFAM" id="SSF57546">
    <property type="entry name" value="Crisp domain-like"/>
    <property type="match status" value="1"/>
</dbReference>
<dbReference type="PROSITE" id="PS51670">
    <property type="entry name" value="SHKT"/>
    <property type="match status" value="1"/>
</dbReference>
<keyword id="KW-0002">3D-structure</keyword>
<keyword id="KW-0165">Cleavage on pair of basic residues</keyword>
<keyword id="KW-0903">Direct protein sequencing</keyword>
<keyword id="KW-1015">Disulfide bond</keyword>
<keyword id="KW-0872">Ion channel impairing toxin</keyword>
<keyword id="KW-0166">Nematocyst</keyword>
<keyword id="KW-0528">Neurotoxin</keyword>
<keyword id="KW-0632">Potassium channel impairing toxin</keyword>
<keyword id="KW-0964">Secreted</keyword>
<keyword id="KW-0732">Signal</keyword>
<keyword id="KW-0800">Toxin</keyword>
<keyword id="KW-1220">Voltage-gated potassium channel impairing toxin</keyword>
<organism>
    <name type="scientific">Anemonia erythraea</name>
    <name type="common">Sea anemone</name>
    <dbReference type="NCBI Taxonomy" id="48400"/>
    <lineage>
        <taxon>Eukaryota</taxon>
        <taxon>Metazoa</taxon>
        <taxon>Cnidaria</taxon>
        <taxon>Anthozoa</taxon>
        <taxon>Hexacorallia</taxon>
        <taxon>Actiniaria</taxon>
        <taxon>Actiniidae</taxon>
        <taxon>Anemonia</taxon>
    </lineage>
</organism>
<name>K1A_ANEER</name>